<sequence length="354" mass="38393">MSYGSCVSRLLRTRVQSVLKKSVHSVAVIGAPFSQGQKRKGVECGPAAIRDAGLVKRLSDLGCRLKDYGDLSFTPVPKDDLYNNLIVNPRSVGLANQELAEVVNRAVSGGYSCVTVGGDHSLAIGTISGHARHCPDLCVVWVDAHADINTPLTTSSGNLHGQPVSFLLRELQDKVPQLPGFSWIKPCISSPSIVYIGLRDVDPPEHFILKKYDIQYFSMRDIDRLGIQKVMEQTFDLLIGKKQRPIHLSFDIDAFDPTLAPATGTPGCGGADLSRRMYISEEIHNTGLLSALDLVEVNPRLAASDEEAKATASLAVDVIASSFGQTREGGHTVYEQLPPPSSPHESENAERVRI</sequence>
<feature type="transit peptide" description="Mitochondrion" evidence="5">
    <location>
        <begin position="1"/>
        <end position="22"/>
    </location>
</feature>
<feature type="chain" id="PRO_0000044614" description="Arginase-2, mitochondrial">
    <location>
        <begin position="23"/>
        <end position="354"/>
    </location>
</feature>
<feature type="region of interest" description="Disordered" evidence="7">
    <location>
        <begin position="330"/>
        <end position="354"/>
    </location>
</feature>
<feature type="compositionally biased region" description="Basic and acidic residues" evidence="7">
    <location>
        <begin position="344"/>
        <end position="354"/>
    </location>
</feature>
<feature type="binding site" evidence="6">
    <location>
        <position position="120"/>
    </location>
    <ligand>
        <name>Mn(2+)</name>
        <dbReference type="ChEBI" id="CHEBI:29035"/>
        <label>1</label>
    </ligand>
</feature>
<feature type="binding site" evidence="6">
    <location>
        <position position="143"/>
    </location>
    <ligand>
        <name>Mn(2+)</name>
        <dbReference type="ChEBI" id="CHEBI:29035"/>
        <label>1</label>
    </ligand>
</feature>
<feature type="binding site" evidence="6">
    <location>
        <position position="143"/>
    </location>
    <ligand>
        <name>Mn(2+)</name>
        <dbReference type="ChEBI" id="CHEBI:29035"/>
        <label>2</label>
    </ligand>
</feature>
<feature type="binding site" evidence="2">
    <location>
        <begin position="145"/>
        <end position="149"/>
    </location>
    <ligand>
        <name>substrate</name>
    </ligand>
</feature>
<feature type="binding site" evidence="6">
    <location>
        <position position="145"/>
    </location>
    <ligand>
        <name>Mn(2+)</name>
        <dbReference type="ChEBI" id="CHEBI:29035"/>
        <label>2</label>
    </ligand>
</feature>
<feature type="binding site" evidence="6">
    <location>
        <position position="147"/>
    </location>
    <ligand>
        <name>Mn(2+)</name>
        <dbReference type="ChEBI" id="CHEBI:29035"/>
        <label>1</label>
    </ligand>
</feature>
<feature type="binding site" evidence="2">
    <location>
        <begin position="156"/>
        <end position="158"/>
    </location>
    <ligand>
        <name>substrate</name>
    </ligand>
</feature>
<feature type="binding site" evidence="2">
    <location>
        <position position="202"/>
    </location>
    <ligand>
        <name>substrate</name>
    </ligand>
</feature>
<feature type="binding site" evidence="6">
    <location>
        <position position="251"/>
    </location>
    <ligand>
        <name>Mn(2+)</name>
        <dbReference type="ChEBI" id="CHEBI:29035"/>
        <label>1</label>
    </ligand>
</feature>
<feature type="binding site" evidence="6">
    <location>
        <position position="251"/>
    </location>
    <ligand>
        <name>Mn(2+)</name>
        <dbReference type="ChEBI" id="CHEBI:29035"/>
        <label>2</label>
    </ligand>
</feature>
<feature type="binding site" evidence="6">
    <location>
        <position position="253"/>
    </location>
    <ligand>
        <name>Mn(2+)</name>
        <dbReference type="ChEBI" id="CHEBI:29035"/>
        <label>2</label>
    </ligand>
</feature>
<feature type="binding site" evidence="3">
    <location>
        <position position="265"/>
    </location>
    <ligand>
        <name>substrate</name>
    </ligand>
</feature>
<feature type="binding site" evidence="4">
    <location>
        <position position="296"/>
    </location>
    <ligand>
        <name>substrate</name>
    </ligand>
</feature>
<keyword id="KW-1064">Adaptive immunity</keyword>
<keyword id="KW-0056">Arginine metabolism</keyword>
<keyword id="KW-0378">Hydrolase</keyword>
<keyword id="KW-0391">Immunity</keyword>
<keyword id="KW-0399">Innate immunity</keyword>
<keyword id="KW-0464">Manganese</keyword>
<keyword id="KW-0479">Metal-binding</keyword>
<keyword id="KW-0496">Mitochondrion</keyword>
<keyword id="KW-1185">Reference proteome</keyword>
<keyword id="KW-0809">Transit peptide</keyword>
<keyword id="KW-0835">Urea cycle</keyword>
<dbReference type="EC" id="3.5.3.1" evidence="2"/>
<dbReference type="EMBL" id="AY864853">
    <property type="protein sequence ID" value="AAX58119.1"/>
    <property type="molecule type" value="mRNA"/>
</dbReference>
<dbReference type="RefSeq" id="NP_001075650.1">
    <property type="nucleotide sequence ID" value="NM_001082181.1"/>
</dbReference>
<dbReference type="SMR" id="Q4VK78"/>
<dbReference type="FunCoup" id="Q4VK78">
    <property type="interactions" value="371"/>
</dbReference>
<dbReference type="STRING" id="9986.ENSOCUP00000034512"/>
<dbReference type="PaxDb" id="9986-ENSOCUP00000000507"/>
<dbReference type="GeneID" id="100008967"/>
<dbReference type="KEGG" id="ocu:100008967"/>
<dbReference type="CTD" id="384"/>
<dbReference type="eggNOG" id="KOG2965">
    <property type="taxonomic scope" value="Eukaryota"/>
</dbReference>
<dbReference type="InParanoid" id="Q4VK78"/>
<dbReference type="OrthoDB" id="9992747at2759"/>
<dbReference type="BRENDA" id="3.5.3.1">
    <property type="organism ID" value="1749"/>
</dbReference>
<dbReference type="UniPathway" id="UPA00158">
    <property type="reaction ID" value="UER00270"/>
</dbReference>
<dbReference type="Proteomes" id="UP000001811">
    <property type="component" value="Unplaced"/>
</dbReference>
<dbReference type="GO" id="GO:0005739">
    <property type="term" value="C:mitochondrion"/>
    <property type="evidence" value="ECO:0007669"/>
    <property type="project" value="UniProtKB-SubCell"/>
</dbReference>
<dbReference type="GO" id="GO:0004053">
    <property type="term" value="F:arginase activity"/>
    <property type="evidence" value="ECO:0007669"/>
    <property type="project" value="UniProtKB-EC"/>
</dbReference>
<dbReference type="GO" id="GO:0030145">
    <property type="term" value="F:manganese ion binding"/>
    <property type="evidence" value="ECO:0007669"/>
    <property type="project" value="TreeGrafter"/>
</dbReference>
<dbReference type="GO" id="GO:0002250">
    <property type="term" value="P:adaptive immune response"/>
    <property type="evidence" value="ECO:0007669"/>
    <property type="project" value="UniProtKB-KW"/>
</dbReference>
<dbReference type="GO" id="GO:0019547">
    <property type="term" value="P:arginine catabolic process to ornithine"/>
    <property type="evidence" value="ECO:0007669"/>
    <property type="project" value="TreeGrafter"/>
</dbReference>
<dbReference type="GO" id="GO:0045087">
    <property type="term" value="P:innate immune response"/>
    <property type="evidence" value="ECO:0007669"/>
    <property type="project" value="UniProtKB-KW"/>
</dbReference>
<dbReference type="GO" id="GO:0000050">
    <property type="term" value="P:urea cycle"/>
    <property type="evidence" value="ECO:0007669"/>
    <property type="project" value="UniProtKB-UniPathway"/>
</dbReference>
<dbReference type="CDD" id="cd09989">
    <property type="entry name" value="Arginase"/>
    <property type="match status" value="1"/>
</dbReference>
<dbReference type="FunFam" id="3.40.800.10:FF:000008">
    <property type="entry name" value="Arginase"/>
    <property type="match status" value="1"/>
</dbReference>
<dbReference type="Gene3D" id="3.40.800.10">
    <property type="entry name" value="Ureohydrolase domain"/>
    <property type="match status" value="1"/>
</dbReference>
<dbReference type="InterPro" id="IPR014033">
    <property type="entry name" value="Arginase"/>
</dbReference>
<dbReference type="InterPro" id="IPR006035">
    <property type="entry name" value="Ureohydrolase"/>
</dbReference>
<dbReference type="InterPro" id="IPR023696">
    <property type="entry name" value="Ureohydrolase_dom_sf"/>
</dbReference>
<dbReference type="InterPro" id="IPR020855">
    <property type="entry name" value="Ureohydrolase_Mn_BS"/>
</dbReference>
<dbReference type="NCBIfam" id="TIGR01229">
    <property type="entry name" value="rocF_arginase"/>
    <property type="match status" value="1"/>
</dbReference>
<dbReference type="PANTHER" id="PTHR43782">
    <property type="entry name" value="ARGINASE"/>
    <property type="match status" value="1"/>
</dbReference>
<dbReference type="PANTHER" id="PTHR43782:SF4">
    <property type="entry name" value="ARGINASE-2, MITOCHONDRIAL"/>
    <property type="match status" value="1"/>
</dbReference>
<dbReference type="Pfam" id="PF00491">
    <property type="entry name" value="Arginase"/>
    <property type="match status" value="1"/>
</dbReference>
<dbReference type="PIRSF" id="PIRSF036979">
    <property type="entry name" value="Arginase"/>
    <property type="match status" value="1"/>
</dbReference>
<dbReference type="PRINTS" id="PR00116">
    <property type="entry name" value="ARGINASE"/>
</dbReference>
<dbReference type="SUPFAM" id="SSF52768">
    <property type="entry name" value="Arginase/deacetylase"/>
    <property type="match status" value="1"/>
</dbReference>
<dbReference type="PROSITE" id="PS01053">
    <property type="entry name" value="ARGINASE_1"/>
    <property type="match status" value="1"/>
</dbReference>
<dbReference type="PROSITE" id="PS51409">
    <property type="entry name" value="ARGINASE_2"/>
    <property type="match status" value="1"/>
</dbReference>
<proteinExistence type="evidence at transcript level"/>
<reference key="1">
    <citation type="submission" date="2004-12" db="EMBL/GenBank/DDBJ databases">
        <title>Chondrocyte phenotype-specific gene.</title>
        <authorList>
            <person name="Ah-Ra K."/>
            <person name="Yun Hyun H."/>
            <person name="Jang-Soo C."/>
        </authorList>
    </citation>
    <scope>NUCLEOTIDE SEQUENCE [MRNA]</scope>
</reference>
<accession>Q4VK78</accession>
<comment type="function">
    <text evidence="1 4">May play a role in the regulation of extra-urea cycle arginine metabolism and also in down-regulation of nitric oxide synthesis. Extrahepatic arginase functions to regulate L-arginine bioavailability to nitric oxid synthase (NOS). Arginine metabolism is a critical regulator of innate and adaptive immune responses. Seems to be involved in negative regulation of the survival capacity of activated T cells. May suppress inflammation-related signaling in asthmatic airway epithelium. May play a role in promoting prenatal immune suppression. Regulates RPS6KB1 signaling, which promotes endothelial cell senescence and inflammation and implicates NOS3/eNOS dysfunction. Can inhibit endothelial autophagy independently of its enzymatic activity implicating mTORC2 signaling. Involved in vascular smooth muscle cell senescence and apoptosis independently of its enzymatic activity.</text>
</comment>
<comment type="catalytic activity">
    <reaction evidence="2">
        <text>L-arginine + H2O = urea + L-ornithine</text>
        <dbReference type="Rhea" id="RHEA:20569"/>
        <dbReference type="ChEBI" id="CHEBI:15377"/>
        <dbReference type="ChEBI" id="CHEBI:16199"/>
        <dbReference type="ChEBI" id="CHEBI:32682"/>
        <dbReference type="ChEBI" id="CHEBI:46911"/>
        <dbReference type="EC" id="3.5.3.1"/>
    </reaction>
</comment>
<comment type="cofactor">
    <cofactor evidence="6">
        <name>Mn(2+)</name>
        <dbReference type="ChEBI" id="CHEBI:29035"/>
    </cofactor>
    <text evidence="6">Binds 2 manganese ions per subunit.</text>
</comment>
<comment type="pathway">
    <text evidence="2">Nitrogen metabolism; urea cycle; L-ornithine and urea from L-arginine: step 1/1.</text>
</comment>
<comment type="subunit">
    <text evidence="4">Homotrimer.</text>
</comment>
<comment type="subcellular location">
    <subcellularLocation>
        <location evidence="1 4">Mitochondrion</location>
    </subcellularLocation>
</comment>
<comment type="similarity">
    <text evidence="6">Belongs to the arginase family.</text>
</comment>
<organism>
    <name type="scientific">Oryctolagus cuniculus</name>
    <name type="common">Rabbit</name>
    <dbReference type="NCBI Taxonomy" id="9986"/>
    <lineage>
        <taxon>Eukaryota</taxon>
        <taxon>Metazoa</taxon>
        <taxon>Chordata</taxon>
        <taxon>Craniata</taxon>
        <taxon>Vertebrata</taxon>
        <taxon>Euteleostomi</taxon>
        <taxon>Mammalia</taxon>
        <taxon>Eutheria</taxon>
        <taxon>Euarchontoglires</taxon>
        <taxon>Glires</taxon>
        <taxon>Lagomorpha</taxon>
        <taxon>Leporidae</taxon>
        <taxon>Oryctolagus</taxon>
    </lineage>
</organism>
<name>ARGI2_RABIT</name>
<evidence type="ECO:0000250" key="1">
    <source>
        <dbReference type="UniProtKB" id="O08691"/>
    </source>
</evidence>
<evidence type="ECO:0000250" key="2">
    <source>
        <dbReference type="UniProtKB" id="P05089"/>
    </source>
</evidence>
<evidence type="ECO:0000250" key="3">
    <source>
        <dbReference type="UniProtKB" id="P53608"/>
    </source>
</evidence>
<evidence type="ECO:0000250" key="4">
    <source>
        <dbReference type="UniProtKB" id="P78540"/>
    </source>
</evidence>
<evidence type="ECO:0000255" key="5"/>
<evidence type="ECO:0000255" key="6">
    <source>
        <dbReference type="PROSITE-ProRule" id="PRU00742"/>
    </source>
</evidence>
<evidence type="ECO:0000256" key="7">
    <source>
        <dbReference type="SAM" id="MobiDB-lite"/>
    </source>
</evidence>
<gene>
    <name type="primary">ARG2</name>
</gene>
<protein>
    <recommendedName>
        <fullName>Arginase-2, mitochondrial</fullName>
        <ecNumber evidence="2">3.5.3.1</ecNumber>
    </recommendedName>
    <alternativeName>
        <fullName>Arginase II</fullName>
    </alternativeName>
    <alternativeName>
        <fullName>Type II arginase</fullName>
    </alternativeName>
</protein>